<keyword id="KW-0025">Alternative splicing</keyword>
<keyword id="KW-0963">Cytoplasm</keyword>
<keyword id="KW-0225">Disease variant</keyword>
<keyword id="KW-0472">Membrane</keyword>
<keyword id="KW-0496">Mitochondrion</keyword>
<keyword id="KW-1000">Mitochondrion outer membrane</keyword>
<keyword id="KW-0597">Phosphoprotein</keyword>
<keyword id="KW-1267">Proteomics identification</keyword>
<keyword id="KW-1185">Reference proteome</keyword>
<name>MSTO1_HUMAN</name>
<accession>Q9BUK6</accession>
<accession>Q53GR8</accession>
<accession>Q5CZ69</accession>
<accession>Q5T717</accession>
<accession>Q68CT6</accession>
<accession>Q7LBZ8</accession>
<accession>Q7Z3M7</accession>
<accession>Q7Z558</accession>
<accession>Q8TE05</accession>
<accession>Q9NQX2</accession>
<accession>Q9NVU4</accession>
<gene>
    <name type="primary">MSTO1</name>
    <name type="ORF">LST005</name>
    <name type="ORF">SLTP005</name>
</gene>
<evidence type="ECO:0000269" key="1">
    <source>
    </source>
</evidence>
<evidence type="ECO:0000269" key="2">
    <source>
    </source>
</evidence>
<evidence type="ECO:0000269" key="3">
    <source>
    </source>
</evidence>
<evidence type="ECO:0000303" key="4">
    <source>
    </source>
</evidence>
<evidence type="ECO:0000303" key="5">
    <source>
    </source>
</evidence>
<evidence type="ECO:0000303" key="6">
    <source ref="1"/>
</evidence>
<evidence type="ECO:0000303" key="7">
    <source ref="2"/>
</evidence>
<evidence type="ECO:0000303" key="8">
    <source ref="4"/>
</evidence>
<evidence type="ECO:0000305" key="9"/>
<evidence type="ECO:0007744" key="10">
    <source>
    </source>
</evidence>
<proteinExistence type="evidence at protein level"/>
<protein>
    <recommendedName>
        <fullName>Protein misato homolog 1</fullName>
    </recommendedName>
</protein>
<organism>
    <name type="scientific">Homo sapiens</name>
    <name type="common">Human</name>
    <dbReference type="NCBI Taxonomy" id="9606"/>
    <lineage>
        <taxon>Eukaryota</taxon>
        <taxon>Metazoa</taxon>
        <taxon>Chordata</taxon>
        <taxon>Craniata</taxon>
        <taxon>Vertebrata</taxon>
        <taxon>Euteleostomi</taxon>
        <taxon>Mammalia</taxon>
        <taxon>Eutheria</taxon>
        <taxon>Euarchontoglires</taxon>
        <taxon>Primates</taxon>
        <taxon>Haplorrhini</taxon>
        <taxon>Catarrhini</taxon>
        <taxon>Hominidae</taxon>
        <taxon>Homo</taxon>
    </lineage>
</organism>
<feature type="chain" id="PRO_0000304626" description="Protein misato homolog 1">
    <location>
        <begin position="1"/>
        <end position="570"/>
    </location>
</feature>
<feature type="modified residue" description="Phosphoserine" evidence="10">
    <location>
        <position position="495"/>
    </location>
</feature>
<feature type="splice variant" id="VSP_028049" description="In isoform 6." evidence="6">
    <location>
        <begin position="1"/>
        <end position="388"/>
    </location>
</feature>
<feature type="splice variant" id="VSP_028050" description="In isoform 5." evidence="7">
    <location>
        <begin position="1"/>
        <end position="178"/>
    </location>
</feature>
<feature type="splice variant" id="VSP_028051" description="In isoform 4." evidence="5">
    <original>QG</original>
    <variation>EC</variation>
    <location>
        <begin position="98"/>
        <end position="99"/>
    </location>
</feature>
<feature type="splice variant" id="VSP_028052" description="In isoform 4." evidence="5">
    <location>
        <begin position="100"/>
        <end position="570"/>
    </location>
</feature>
<feature type="splice variant" id="VSP_028053" description="In isoform 7." evidence="4">
    <location>
        <begin position="105"/>
        <end position="139"/>
    </location>
</feature>
<feature type="splice variant" id="VSP_028054" description="In isoform 3." evidence="5">
    <location>
        <begin position="489"/>
        <end position="500"/>
    </location>
</feature>
<feature type="splice variant" id="VSP_028055" description="In isoform 7." evidence="4">
    <location>
        <begin position="489"/>
        <end position="499"/>
    </location>
</feature>
<feature type="splice variant" id="VSP_028056" description="In isoform 2 and isoform 5." evidence="7 8">
    <location>
        <position position="499"/>
    </location>
</feature>
<feature type="sequence variant" id="VAR_079889" description="In MMYAT; autosomal dominant; patient cells show decreased mitochondrial fusion and mitochondrial network formation; patient cells show increased mitochondria aggregation and fragmentation; dbSNP:rs762798018." evidence="3">
    <original>V</original>
    <variation>M</variation>
    <location>
        <position position="8"/>
    </location>
</feature>
<feature type="sequence variant" id="VAR_035046" description="In MMYAT; uncertain significance; dbSNP:rs622288." evidence="2">
    <original>T</original>
    <variation>I</variation>
    <location>
        <position position="324"/>
    </location>
</feature>
<feature type="sequence variant" id="VAR_079890" description="In MMYAT; uncertain significance; dbSNP:rs749922789." evidence="2">
    <original>R</original>
    <variation>C</variation>
    <location>
        <position position="345"/>
    </location>
</feature>
<feature type="sequence variant" id="VAR_079891" description="In MMYAT; uncertain significance; dbSNP:rs1553295536." evidence="2">
    <original>F</original>
    <variation>L</variation>
    <location>
        <position position="376"/>
    </location>
</feature>
<feature type="sequence conflict" description="In Ref. 3; BAA91651." evidence="9" ref="3">
    <original>M</original>
    <variation>V</variation>
    <location>
        <position position="389"/>
    </location>
</feature>
<feature type="sequence conflict" description="In Ref. 3; AK092950." evidence="9" ref="3">
    <original>F</original>
    <variation>S</variation>
    <location>
        <position position="482"/>
    </location>
</feature>
<feature type="sequence conflict" description="In Ref. 5; CAI59784." evidence="9" ref="5">
    <original>Q</original>
    <variation>P</variation>
    <location>
        <position position="563"/>
    </location>
</feature>
<dbReference type="EMBL" id="AF111708">
    <property type="protein sequence ID" value="AAM12424.1"/>
    <property type="status" value="ALT_FRAME"/>
    <property type="molecule type" value="mRNA"/>
</dbReference>
<dbReference type="EMBL" id="AY334564">
    <property type="protein sequence ID" value="AAP94730.1"/>
    <property type="molecule type" value="mRNA"/>
</dbReference>
<dbReference type="EMBL" id="AK001366">
    <property type="protein sequence ID" value="BAA91651.1"/>
    <property type="molecule type" value="mRNA"/>
</dbReference>
<dbReference type="EMBL" id="AK092950">
    <property type="status" value="NOT_ANNOTATED_CDS"/>
    <property type="molecule type" value="mRNA"/>
</dbReference>
<dbReference type="EMBL" id="AK222863">
    <property type="protein sequence ID" value="BAD96583.1"/>
    <property type="molecule type" value="mRNA"/>
</dbReference>
<dbReference type="EMBL" id="BX537684">
    <property type="protein sequence ID" value="CAD97810.1"/>
    <property type="molecule type" value="mRNA"/>
</dbReference>
<dbReference type="EMBL" id="CR749791">
    <property type="protein sequence ID" value="CAH18652.1"/>
    <property type="molecule type" value="mRNA"/>
</dbReference>
<dbReference type="EMBL" id="CR936872">
    <property type="protein sequence ID" value="CAI59784.1"/>
    <property type="molecule type" value="Transcribed_RNA"/>
</dbReference>
<dbReference type="EMBL" id="AL353807">
    <property type="status" value="NOT_ANNOTATED_CDS"/>
    <property type="molecule type" value="Genomic_DNA"/>
</dbReference>
<dbReference type="EMBL" id="BC002535">
    <property type="protein sequence ID" value="AAH02535.1"/>
    <property type="molecule type" value="mRNA"/>
</dbReference>
<dbReference type="EMBL" id="AF272833">
    <property type="protein sequence ID" value="AAF81794.1"/>
    <property type="molecule type" value="mRNA"/>
</dbReference>
<dbReference type="CCDS" id="CCDS1114.1">
    <molecule id="Q9BUK6-1"/>
</dbReference>
<dbReference type="RefSeq" id="NP_001243461.1">
    <molecule id="Q9BUK6-2"/>
    <property type="nucleotide sequence ID" value="NM_001256532.1"/>
</dbReference>
<dbReference type="RefSeq" id="NP_001243462.1">
    <molecule id="Q9BUK6-3"/>
    <property type="nucleotide sequence ID" value="NM_001256533.1"/>
</dbReference>
<dbReference type="RefSeq" id="NP_001337712.1">
    <molecule id="Q9BUK6-5"/>
    <property type="nucleotide sequence ID" value="NM_001350783.1"/>
</dbReference>
<dbReference type="RefSeq" id="NP_060586.2">
    <molecule id="Q9BUK6-1"/>
    <property type="nucleotide sequence ID" value="NM_018116.3"/>
</dbReference>
<dbReference type="RefSeq" id="XP_011508010.1">
    <property type="nucleotide sequence ID" value="XM_011509708.1"/>
</dbReference>
<dbReference type="RefSeq" id="XP_016857098.1">
    <property type="nucleotide sequence ID" value="XM_017001609.1"/>
</dbReference>
<dbReference type="RefSeq" id="XP_047279963.1">
    <molecule id="Q9BUK6-1"/>
    <property type="nucleotide sequence ID" value="XM_047424007.1"/>
</dbReference>
<dbReference type="RefSeq" id="XP_047279964.1">
    <molecule id="Q9BUK6-1"/>
    <property type="nucleotide sequence ID" value="XM_047424008.1"/>
</dbReference>
<dbReference type="BioGRID" id="120457">
    <property type="interactions" value="67"/>
</dbReference>
<dbReference type="FunCoup" id="Q9BUK6">
    <property type="interactions" value="2362"/>
</dbReference>
<dbReference type="IntAct" id="Q9BUK6">
    <property type="interactions" value="42"/>
</dbReference>
<dbReference type="MINT" id="Q9BUK6"/>
<dbReference type="STRING" id="9606.ENSP00000245564"/>
<dbReference type="GlyGen" id="Q9BUK6">
    <property type="glycosylation" value="1 site, 1 O-linked glycan (1 site)"/>
</dbReference>
<dbReference type="iPTMnet" id="Q9BUK6"/>
<dbReference type="PhosphoSitePlus" id="Q9BUK6"/>
<dbReference type="BioMuta" id="MSTO1"/>
<dbReference type="DMDM" id="74752357"/>
<dbReference type="jPOST" id="Q9BUK6"/>
<dbReference type="MassIVE" id="Q9BUK6"/>
<dbReference type="PaxDb" id="9606-ENSP00000245564"/>
<dbReference type="PeptideAtlas" id="Q9BUK6"/>
<dbReference type="ProteomicsDB" id="79098">
    <molecule id="Q9BUK6-1"/>
</dbReference>
<dbReference type="ProteomicsDB" id="79099">
    <molecule id="Q9BUK6-2"/>
</dbReference>
<dbReference type="ProteomicsDB" id="79100">
    <molecule id="Q9BUK6-3"/>
</dbReference>
<dbReference type="ProteomicsDB" id="79101">
    <molecule id="Q9BUK6-4"/>
</dbReference>
<dbReference type="ProteomicsDB" id="79102">
    <molecule id="Q9BUK6-5"/>
</dbReference>
<dbReference type="ProteomicsDB" id="79103">
    <molecule id="Q9BUK6-6"/>
</dbReference>
<dbReference type="ProteomicsDB" id="79104">
    <molecule id="Q9BUK6-7"/>
</dbReference>
<dbReference type="Pumba" id="Q9BUK6"/>
<dbReference type="Antibodypedia" id="35210">
    <property type="antibodies" value="106 antibodies from 24 providers"/>
</dbReference>
<dbReference type="DNASU" id="55154"/>
<dbReference type="Ensembl" id="ENST00000245564.8">
    <molecule id="Q9BUK6-1"/>
    <property type="protein sequence ID" value="ENSP00000245564.3"/>
    <property type="gene ID" value="ENSG00000125459.18"/>
</dbReference>
<dbReference type="Ensembl" id="ENST00000368341.8">
    <molecule id="Q9BUK6-7"/>
    <property type="protein sequence ID" value="ENSP00000357325.4"/>
    <property type="gene ID" value="ENSG00000125459.18"/>
</dbReference>
<dbReference type="Ensembl" id="ENST00000490743.5">
    <molecule id="Q9BUK6-4"/>
    <property type="protein sequence ID" value="ENSP00000476353.1"/>
    <property type="gene ID" value="ENSG00000125459.18"/>
</dbReference>
<dbReference type="GeneID" id="55154"/>
<dbReference type="KEGG" id="hsa:55154"/>
<dbReference type="MANE-Select" id="ENST00000245564.8">
    <property type="protein sequence ID" value="ENSP00000245564.3"/>
    <property type="RefSeq nucleotide sequence ID" value="NM_018116.4"/>
    <property type="RefSeq protein sequence ID" value="NP_060586.2"/>
</dbReference>
<dbReference type="UCSC" id="uc001fky.5">
    <molecule id="Q9BUK6-1"/>
    <property type="organism name" value="human"/>
</dbReference>
<dbReference type="AGR" id="HGNC:29678"/>
<dbReference type="CTD" id="55154"/>
<dbReference type="DisGeNET" id="55154"/>
<dbReference type="GeneCards" id="MSTO1"/>
<dbReference type="HGNC" id="HGNC:29678">
    <property type="gene designation" value="MSTO1"/>
</dbReference>
<dbReference type="HPA" id="ENSG00000125459">
    <property type="expression patterns" value="Low tissue specificity"/>
</dbReference>
<dbReference type="MalaCards" id="MSTO1"/>
<dbReference type="MIM" id="617619">
    <property type="type" value="gene"/>
</dbReference>
<dbReference type="MIM" id="617675">
    <property type="type" value="phenotype"/>
</dbReference>
<dbReference type="neXtProt" id="NX_Q9BUK6"/>
<dbReference type="Orphanet" id="502423">
    <property type="disease" value="Mitochondrial myopathy-cerebellar ataxia-pigmentary retinopathy syndrome"/>
</dbReference>
<dbReference type="PharmGKB" id="PA142671313"/>
<dbReference type="VEuPathDB" id="HostDB:ENSG00000125459"/>
<dbReference type="eggNOG" id="KOG2530">
    <property type="taxonomic scope" value="Eukaryota"/>
</dbReference>
<dbReference type="GeneTree" id="ENSGT00530000064067"/>
<dbReference type="HOGENOM" id="CLU_184878_0_0_1"/>
<dbReference type="InParanoid" id="Q9BUK6"/>
<dbReference type="OMA" id="RMAAYGC"/>
<dbReference type="OrthoDB" id="271881at2759"/>
<dbReference type="PAN-GO" id="Q9BUK6">
    <property type="GO annotations" value="2 GO annotations based on evolutionary models"/>
</dbReference>
<dbReference type="PhylomeDB" id="Q9BUK6"/>
<dbReference type="TreeFam" id="TF323669"/>
<dbReference type="PathwayCommons" id="Q9BUK6"/>
<dbReference type="SignaLink" id="Q9BUK6"/>
<dbReference type="BioGRID-ORCS" id="55154">
    <property type="hits" value="479 hits in 1159 CRISPR screens"/>
</dbReference>
<dbReference type="ChiTaRS" id="MSTO1">
    <property type="organism name" value="human"/>
</dbReference>
<dbReference type="GeneWiki" id="MSTO1"/>
<dbReference type="GenomeRNAi" id="55154"/>
<dbReference type="Pharos" id="Q9BUK6">
    <property type="development level" value="Tbio"/>
</dbReference>
<dbReference type="PRO" id="PR:Q9BUK6"/>
<dbReference type="Proteomes" id="UP000005640">
    <property type="component" value="Chromosome 1"/>
</dbReference>
<dbReference type="RNAct" id="Q9BUK6">
    <property type="molecule type" value="protein"/>
</dbReference>
<dbReference type="Bgee" id="ENSG00000125459">
    <property type="expression patterns" value="Expressed in left testis and 95 other cell types or tissues"/>
</dbReference>
<dbReference type="ExpressionAtlas" id="Q9BUK6">
    <property type="expression patterns" value="baseline and differential"/>
</dbReference>
<dbReference type="GO" id="GO:0005737">
    <property type="term" value="C:cytoplasm"/>
    <property type="evidence" value="ECO:0000314"/>
    <property type="project" value="LIFEdb"/>
</dbReference>
<dbReference type="GO" id="GO:0005829">
    <property type="term" value="C:cytosol"/>
    <property type="evidence" value="ECO:0000314"/>
    <property type="project" value="HPA"/>
</dbReference>
<dbReference type="GO" id="GO:0005741">
    <property type="term" value="C:mitochondrial outer membrane"/>
    <property type="evidence" value="ECO:0000314"/>
    <property type="project" value="UniProtKB"/>
</dbReference>
<dbReference type="GO" id="GO:0005739">
    <property type="term" value="C:mitochondrion"/>
    <property type="evidence" value="ECO:0006056"/>
    <property type="project" value="FlyBase"/>
</dbReference>
<dbReference type="GO" id="GO:0048311">
    <property type="term" value="P:mitochondrion distribution"/>
    <property type="evidence" value="ECO:0000315"/>
    <property type="project" value="UniProtKB"/>
</dbReference>
<dbReference type="GO" id="GO:0007005">
    <property type="term" value="P:mitochondrion organization"/>
    <property type="evidence" value="ECO:0000315"/>
    <property type="project" value="UniProtKB"/>
</dbReference>
<dbReference type="GO" id="GO:0010636">
    <property type="term" value="P:positive regulation of mitochondrial fusion"/>
    <property type="evidence" value="ECO:0000315"/>
    <property type="project" value="FlyBase"/>
</dbReference>
<dbReference type="CDD" id="cd06060">
    <property type="entry name" value="misato"/>
    <property type="match status" value="1"/>
</dbReference>
<dbReference type="Gene3D" id="3.40.50.1440">
    <property type="entry name" value="Tubulin/FtsZ, GTPase domain"/>
    <property type="match status" value="1"/>
</dbReference>
<dbReference type="InterPro" id="IPR049942">
    <property type="entry name" value="DML1/Misato"/>
</dbReference>
<dbReference type="InterPro" id="IPR029209">
    <property type="entry name" value="DML1/Misato_tubulin"/>
</dbReference>
<dbReference type="InterPro" id="IPR019605">
    <property type="entry name" value="Misato_II_tubulin-like"/>
</dbReference>
<dbReference type="InterPro" id="IPR036525">
    <property type="entry name" value="Tubulin/FtsZ_GTPase_sf"/>
</dbReference>
<dbReference type="PANTHER" id="PTHR13391">
    <property type="entry name" value="MITOCHONDRIAL DISTRIBUTION REGULATOR MISATO"/>
    <property type="match status" value="1"/>
</dbReference>
<dbReference type="PANTHER" id="PTHR13391:SF0">
    <property type="entry name" value="PROTEIN MISATO HOMOLOG 1"/>
    <property type="match status" value="1"/>
</dbReference>
<dbReference type="Pfam" id="PF10644">
    <property type="entry name" value="Misat_Tub_SegII"/>
    <property type="match status" value="1"/>
</dbReference>
<dbReference type="Pfam" id="PF14881">
    <property type="entry name" value="Tubulin_3"/>
    <property type="match status" value="1"/>
</dbReference>
<dbReference type="SUPFAM" id="SSF52490">
    <property type="entry name" value="Tubulin nucleotide-binding domain-like"/>
    <property type="match status" value="1"/>
</dbReference>
<sequence length="570" mass="61835">MAGGAREVLTLQLGHFAGFVGAHWWNQQDAALGRATDSKEPPGELCPDVLYRTGRTLHGQETYTPRLILMDLKGSLSSLKEEGGLYRDKQLDAAIAWQGKLTTHKEELYPKNPYLQDFLSAEGVLSSDGVWRVKSIPNGKGSSPLPTATTPKPLIPTEASIRVWSDFLRVHLHPRSICMIQKYNHDGEAGRLEAFGQGESVLKEPKYQEELEDRLHFYVEECDYLQGFQILCDLHDGFSGVGAKAAELLQDEYSGRGIITWGLLPGPYHRGEAQRNIYRLLNTAFGLVHLTAHSSLVCPLSLGGSLGLRPEPPVSFPYLHYDATLPFHCSAILATALDTVTVPYRLCSSPVSMVHLADMLSFCGKKVVTAGAIIPFPLAPGQSLPDSLMQFGGATPWTPLSACGEPSGTRCFAQSVVLRGIDRACHTSQLTPGTPPPSALHACTTGEEILAQYLQQQQPGVMSSSHLLLTPCRVAPPYPHLFSSCSPPGMVLDGSPKGAAVESIPVFGALCSSSSLHQTLEALARDLTKLDLRRWASFMDAGVEHDDVAELLQELQSLAQCYQGGDSLVD</sequence>
<reference key="1">
    <citation type="submission" date="1998-12" db="EMBL/GenBank/DDBJ databases">
        <authorList>
            <person name="Hui R.T."/>
            <person name="Liu B."/>
            <person name="Zhao B."/>
            <person name="Wang X.Y."/>
        </authorList>
    </citation>
    <scope>NUCLEOTIDE SEQUENCE [LARGE SCALE MRNA] (ISOFORM 6)</scope>
    <source>
        <tissue>Aorta</tissue>
    </source>
</reference>
<reference key="2">
    <citation type="submission" date="2003-07" db="EMBL/GenBank/DDBJ databases">
        <title>Identification and characterization of a gene coding an alternative splice of FLJ10504 in testis.</title>
        <authorList>
            <person name="Gu A.H."/>
            <person name="Xu Z.Y."/>
            <person name="Wang H."/>
            <person name="Xu M."/>
            <person name="Yin L.L."/>
        </authorList>
    </citation>
    <scope>NUCLEOTIDE SEQUENCE [MRNA] (ISOFORM 5)</scope>
    <source>
        <tissue>Testis</tissue>
    </source>
</reference>
<reference key="3">
    <citation type="journal article" date="2004" name="Nat. Genet.">
        <title>Complete sequencing and characterization of 21,243 full-length human cDNAs.</title>
        <authorList>
            <person name="Ota T."/>
            <person name="Suzuki Y."/>
            <person name="Nishikawa T."/>
            <person name="Otsuki T."/>
            <person name="Sugiyama T."/>
            <person name="Irie R."/>
            <person name="Wakamatsu A."/>
            <person name="Hayashi K."/>
            <person name="Sato H."/>
            <person name="Nagai K."/>
            <person name="Kimura K."/>
            <person name="Makita H."/>
            <person name="Sekine M."/>
            <person name="Obayashi M."/>
            <person name="Nishi T."/>
            <person name="Shibahara T."/>
            <person name="Tanaka T."/>
            <person name="Ishii S."/>
            <person name="Yamamoto J."/>
            <person name="Saito K."/>
            <person name="Kawai Y."/>
            <person name="Isono Y."/>
            <person name="Nakamura Y."/>
            <person name="Nagahari K."/>
            <person name="Murakami K."/>
            <person name="Yasuda T."/>
            <person name="Iwayanagi T."/>
            <person name="Wagatsuma M."/>
            <person name="Shiratori A."/>
            <person name="Sudo H."/>
            <person name="Hosoiri T."/>
            <person name="Kaku Y."/>
            <person name="Kodaira H."/>
            <person name="Kondo H."/>
            <person name="Sugawara M."/>
            <person name="Takahashi M."/>
            <person name="Kanda K."/>
            <person name="Yokoi T."/>
            <person name="Furuya T."/>
            <person name="Kikkawa E."/>
            <person name="Omura Y."/>
            <person name="Abe K."/>
            <person name="Kamihara K."/>
            <person name="Katsuta N."/>
            <person name="Sato K."/>
            <person name="Tanikawa M."/>
            <person name="Yamazaki M."/>
            <person name="Ninomiya K."/>
            <person name="Ishibashi T."/>
            <person name="Yamashita H."/>
            <person name="Murakawa K."/>
            <person name="Fujimori K."/>
            <person name="Tanai H."/>
            <person name="Kimata M."/>
            <person name="Watanabe M."/>
            <person name="Hiraoka S."/>
            <person name="Chiba Y."/>
            <person name="Ishida S."/>
            <person name="Ono Y."/>
            <person name="Takiguchi S."/>
            <person name="Watanabe S."/>
            <person name="Yosida M."/>
            <person name="Hotuta T."/>
            <person name="Kusano J."/>
            <person name="Kanehori K."/>
            <person name="Takahashi-Fujii A."/>
            <person name="Hara H."/>
            <person name="Tanase T.-O."/>
            <person name="Nomura Y."/>
            <person name="Togiya S."/>
            <person name="Komai F."/>
            <person name="Hara R."/>
            <person name="Takeuchi K."/>
            <person name="Arita M."/>
            <person name="Imose N."/>
            <person name="Musashino K."/>
            <person name="Yuuki H."/>
            <person name="Oshima A."/>
            <person name="Sasaki N."/>
            <person name="Aotsuka S."/>
            <person name="Yoshikawa Y."/>
            <person name="Matsunawa H."/>
            <person name="Ichihara T."/>
            <person name="Shiohata N."/>
            <person name="Sano S."/>
            <person name="Moriya S."/>
            <person name="Momiyama H."/>
            <person name="Satoh N."/>
            <person name="Takami S."/>
            <person name="Terashima Y."/>
            <person name="Suzuki O."/>
            <person name="Nakagawa S."/>
            <person name="Senoh A."/>
            <person name="Mizoguchi H."/>
            <person name="Goto Y."/>
            <person name="Shimizu F."/>
            <person name="Wakebe H."/>
            <person name="Hishigaki H."/>
            <person name="Watanabe T."/>
            <person name="Sugiyama A."/>
            <person name="Takemoto M."/>
            <person name="Kawakami B."/>
            <person name="Yamazaki M."/>
            <person name="Watanabe K."/>
            <person name="Kumagai A."/>
            <person name="Itakura S."/>
            <person name="Fukuzumi Y."/>
            <person name="Fujimori Y."/>
            <person name="Komiyama M."/>
            <person name="Tashiro H."/>
            <person name="Tanigami A."/>
            <person name="Fujiwara T."/>
            <person name="Ono T."/>
            <person name="Yamada K."/>
            <person name="Fujii Y."/>
            <person name="Ozaki K."/>
            <person name="Hirao M."/>
            <person name="Ohmori Y."/>
            <person name="Kawabata A."/>
            <person name="Hikiji T."/>
            <person name="Kobatake N."/>
            <person name="Inagaki H."/>
            <person name="Ikema Y."/>
            <person name="Okamoto S."/>
            <person name="Okitani R."/>
            <person name="Kawakami T."/>
            <person name="Noguchi S."/>
            <person name="Itoh T."/>
            <person name="Shigeta K."/>
            <person name="Senba T."/>
            <person name="Matsumura K."/>
            <person name="Nakajima Y."/>
            <person name="Mizuno T."/>
            <person name="Morinaga M."/>
            <person name="Sasaki M."/>
            <person name="Togashi T."/>
            <person name="Oyama M."/>
            <person name="Hata H."/>
            <person name="Watanabe M."/>
            <person name="Komatsu T."/>
            <person name="Mizushima-Sugano J."/>
            <person name="Satoh T."/>
            <person name="Shirai Y."/>
            <person name="Takahashi Y."/>
            <person name="Nakagawa K."/>
            <person name="Okumura K."/>
            <person name="Nagase T."/>
            <person name="Nomura N."/>
            <person name="Kikuchi H."/>
            <person name="Masuho Y."/>
            <person name="Yamashita R."/>
            <person name="Nakai K."/>
            <person name="Yada T."/>
            <person name="Nakamura Y."/>
            <person name="Ohara O."/>
            <person name="Isogai T."/>
            <person name="Sugano S."/>
        </authorList>
    </citation>
    <scope>NUCLEOTIDE SEQUENCE [LARGE SCALE MRNA] (ISOFORMS 1 AND 7)</scope>
    <source>
        <tissue>Spleen</tissue>
        <tissue>Teratocarcinoma</tissue>
    </source>
</reference>
<reference key="4">
    <citation type="submission" date="2005-04" db="EMBL/GenBank/DDBJ databases">
        <authorList>
            <person name="Suzuki Y."/>
            <person name="Sugano S."/>
            <person name="Totoki Y."/>
            <person name="Toyoda A."/>
            <person name="Takeda T."/>
            <person name="Sakaki Y."/>
            <person name="Tanaka A."/>
            <person name="Yokoyama S."/>
        </authorList>
    </citation>
    <scope>NUCLEOTIDE SEQUENCE [LARGE SCALE MRNA] (ISOFORM 2)</scope>
    <source>
        <tissue>Liver</tissue>
    </source>
</reference>
<reference key="5">
    <citation type="journal article" date="2007" name="BMC Genomics">
        <title>The full-ORF clone resource of the German cDNA consortium.</title>
        <authorList>
            <person name="Bechtel S."/>
            <person name="Rosenfelder H."/>
            <person name="Duda A."/>
            <person name="Schmidt C.P."/>
            <person name="Ernst U."/>
            <person name="Wellenreuther R."/>
            <person name="Mehrle A."/>
            <person name="Schuster C."/>
            <person name="Bahr A."/>
            <person name="Bloecker H."/>
            <person name="Heubner D."/>
            <person name="Hoerlein A."/>
            <person name="Michel G."/>
            <person name="Wedler H."/>
            <person name="Koehrer K."/>
            <person name="Ottenwaelder B."/>
            <person name="Poustka A."/>
            <person name="Wiemann S."/>
            <person name="Schupp I."/>
        </authorList>
    </citation>
    <scope>NUCLEOTIDE SEQUENCE [LARGE SCALE MRNA] (ISOFORMS 1; 3 AND 4)</scope>
    <source>
        <tissue>Cerebellum</tissue>
        <tissue>Endometrium</tissue>
        <tissue>Hippocampus</tissue>
    </source>
</reference>
<reference key="6">
    <citation type="journal article" date="2006" name="Nature">
        <title>The DNA sequence and biological annotation of human chromosome 1.</title>
        <authorList>
            <person name="Gregory S.G."/>
            <person name="Barlow K.F."/>
            <person name="McLay K.E."/>
            <person name="Kaul R."/>
            <person name="Swarbreck D."/>
            <person name="Dunham A."/>
            <person name="Scott C.E."/>
            <person name="Howe K.L."/>
            <person name="Woodfine K."/>
            <person name="Spencer C.C.A."/>
            <person name="Jones M.C."/>
            <person name="Gillson C."/>
            <person name="Searle S."/>
            <person name="Zhou Y."/>
            <person name="Kokocinski F."/>
            <person name="McDonald L."/>
            <person name="Evans R."/>
            <person name="Phillips K."/>
            <person name="Atkinson A."/>
            <person name="Cooper R."/>
            <person name="Jones C."/>
            <person name="Hall R.E."/>
            <person name="Andrews T.D."/>
            <person name="Lloyd C."/>
            <person name="Ainscough R."/>
            <person name="Almeida J.P."/>
            <person name="Ambrose K.D."/>
            <person name="Anderson F."/>
            <person name="Andrew R.W."/>
            <person name="Ashwell R.I.S."/>
            <person name="Aubin K."/>
            <person name="Babbage A.K."/>
            <person name="Bagguley C.L."/>
            <person name="Bailey J."/>
            <person name="Beasley H."/>
            <person name="Bethel G."/>
            <person name="Bird C.P."/>
            <person name="Bray-Allen S."/>
            <person name="Brown J.Y."/>
            <person name="Brown A.J."/>
            <person name="Buckley D."/>
            <person name="Burton J."/>
            <person name="Bye J."/>
            <person name="Carder C."/>
            <person name="Chapman J.C."/>
            <person name="Clark S.Y."/>
            <person name="Clarke G."/>
            <person name="Clee C."/>
            <person name="Cobley V."/>
            <person name="Collier R.E."/>
            <person name="Corby N."/>
            <person name="Coville G.J."/>
            <person name="Davies J."/>
            <person name="Deadman R."/>
            <person name="Dunn M."/>
            <person name="Earthrowl M."/>
            <person name="Ellington A.G."/>
            <person name="Errington H."/>
            <person name="Frankish A."/>
            <person name="Frankland J."/>
            <person name="French L."/>
            <person name="Garner P."/>
            <person name="Garnett J."/>
            <person name="Gay L."/>
            <person name="Ghori M.R.J."/>
            <person name="Gibson R."/>
            <person name="Gilby L.M."/>
            <person name="Gillett W."/>
            <person name="Glithero R.J."/>
            <person name="Grafham D.V."/>
            <person name="Griffiths C."/>
            <person name="Griffiths-Jones S."/>
            <person name="Grocock R."/>
            <person name="Hammond S."/>
            <person name="Harrison E.S.I."/>
            <person name="Hart E."/>
            <person name="Haugen E."/>
            <person name="Heath P.D."/>
            <person name="Holmes S."/>
            <person name="Holt K."/>
            <person name="Howden P.J."/>
            <person name="Hunt A.R."/>
            <person name="Hunt S.E."/>
            <person name="Hunter G."/>
            <person name="Isherwood J."/>
            <person name="James R."/>
            <person name="Johnson C."/>
            <person name="Johnson D."/>
            <person name="Joy A."/>
            <person name="Kay M."/>
            <person name="Kershaw J.K."/>
            <person name="Kibukawa M."/>
            <person name="Kimberley A.M."/>
            <person name="King A."/>
            <person name="Knights A.J."/>
            <person name="Lad H."/>
            <person name="Laird G."/>
            <person name="Lawlor S."/>
            <person name="Leongamornlert D.A."/>
            <person name="Lloyd D.M."/>
            <person name="Loveland J."/>
            <person name="Lovell J."/>
            <person name="Lush M.J."/>
            <person name="Lyne R."/>
            <person name="Martin S."/>
            <person name="Mashreghi-Mohammadi M."/>
            <person name="Matthews L."/>
            <person name="Matthews N.S.W."/>
            <person name="McLaren S."/>
            <person name="Milne S."/>
            <person name="Mistry S."/>
            <person name="Moore M.J.F."/>
            <person name="Nickerson T."/>
            <person name="O'Dell C.N."/>
            <person name="Oliver K."/>
            <person name="Palmeiri A."/>
            <person name="Palmer S.A."/>
            <person name="Parker A."/>
            <person name="Patel D."/>
            <person name="Pearce A.V."/>
            <person name="Peck A.I."/>
            <person name="Pelan S."/>
            <person name="Phelps K."/>
            <person name="Phillimore B.J."/>
            <person name="Plumb R."/>
            <person name="Rajan J."/>
            <person name="Raymond C."/>
            <person name="Rouse G."/>
            <person name="Saenphimmachak C."/>
            <person name="Sehra H.K."/>
            <person name="Sheridan E."/>
            <person name="Shownkeen R."/>
            <person name="Sims S."/>
            <person name="Skuce C.D."/>
            <person name="Smith M."/>
            <person name="Steward C."/>
            <person name="Subramanian S."/>
            <person name="Sycamore N."/>
            <person name="Tracey A."/>
            <person name="Tromans A."/>
            <person name="Van Helmond Z."/>
            <person name="Wall M."/>
            <person name="Wallis J.M."/>
            <person name="White S."/>
            <person name="Whitehead S.L."/>
            <person name="Wilkinson J.E."/>
            <person name="Willey D.L."/>
            <person name="Williams H."/>
            <person name="Wilming L."/>
            <person name="Wray P.W."/>
            <person name="Wu Z."/>
            <person name="Coulson A."/>
            <person name="Vaudin M."/>
            <person name="Sulston J.E."/>
            <person name="Durbin R.M."/>
            <person name="Hubbard T."/>
            <person name="Wooster R."/>
            <person name="Dunham I."/>
            <person name="Carter N.P."/>
            <person name="McVean G."/>
            <person name="Ross M.T."/>
            <person name="Harrow J."/>
            <person name="Olson M.V."/>
            <person name="Beck S."/>
            <person name="Rogers J."/>
            <person name="Bentley D.R."/>
        </authorList>
    </citation>
    <scope>NUCLEOTIDE SEQUENCE [LARGE SCALE GENOMIC DNA]</scope>
</reference>
<reference key="7">
    <citation type="journal article" date="2004" name="Genome Res.">
        <title>The status, quality, and expansion of the NIH full-length cDNA project: the Mammalian Gene Collection (MGC).</title>
        <authorList>
            <consortium name="The MGC Project Team"/>
        </authorList>
    </citation>
    <scope>NUCLEOTIDE SEQUENCE [LARGE SCALE MRNA] (ISOFORM 1)</scope>
    <source>
        <tissue>Placenta</tissue>
    </source>
</reference>
<reference key="8">
    <citation type="submission" date="2000-05" db="EMBL/GenBank/DDBJ databases">
        <title>Human homologue of the Drosophila Misato gene.</title>
        <authorList>
            <person name="Fong K.S.K."/>
            <person name="Fukushima D."/>
            <person name="de Couet H.G."/>
        </authorList>
    </citation>
    <scope>NUCLEOTIDE SEQUENCE [MRNA] OF 16-570 (ISOFORM 1)</scope>
    <source>
        <tissue>Heart</tissue>
    </source>
</reference>
<reference key="9">
    <citation type="journal article" date="2007" name="Exp. Cell Res.">
        <title>Human Misato regulates mitochondrial distribution and morphology.</title>
        <authorList>
            <person name="Kimura M."/>
            <person name="Okano Y."/>
        </authorList>
    </citation>
    <scope>FUNCTION</scope>
    <scope>SUBCELLULAR LOCATION</scope>
    <scope>TISSUE SPECIFICITY</scope>
</reference>
<reference key="10">
    <citation type="journal article" date="2008" name="Proc. Natl. Acad. Sci. U.S.A.">
        <title>A quantitative atlas of mitotic phosphorylation.</title>
        <authorList>
            <person name="Dephoure N."/>
            <person name="Zhou C."/>
            <person name="Villen J."/>
            <person name="Beausoleil S.A."/>
            <person name="Bakalarski C.E."/>
            <person name="Elledge S.J."/>
            <person name="Gygi S.P."/>
        </authorList>
    </citation>
    <scope>PHOSPHORYLATION [LARGE SCALE ANALYSIS] AT SER-495</scope>
    <scope>IDENTIFICATION BY MASS SPECTROMETRY [LARGE SCALE ANALYSIS]</scope>
    <source>
        <tissue>Cervix carcinoma</tissue>
    </source>
</reference>
<reference key="11">
    <citation type="journal article" date="2011" name="BMC Syst. Biol.">
        <title>Initial characterization of the human central proteome.</title>
        <authorList>
            <person name="Burkard T.R."/>
            <person name="Planyavsky M."/>
            <person name="Kaupe I."/>
            <person name="Breitwieser F.P."/>
            <person name="Buerckstuemmer T."/>
            <person name="Bennett K.L."/>
            <person name="Superti-Furga G."/>
            <person name="Colinge J."/>
        </authorList>
    </citation>
    <scope>IDENTIFICATION BY MASS SPECTROMETRY [LARGE SCALE ANALYSIS]</scope>
</reference>
<reference key="12">
    <citation type="journal article" date="2013" name="J. Proteome Res.">
        <title>Toward a comprehensive characterization of a human cancer cell phosphoproteome.</title>
        <authorList>
            <person name="Zhou H."/>
            <person name="Di Palma S."/>
            <person name="Preisinger C."/>
            <person name="Peng M."/>
            <person name="Polat A.N."/>
            <person name="Heck A.J."/>
            <person name="Mohammed S."/>
        </authorList>
    </citation>
    <scope>IDENTIFICATION BY MASS SPECTROMETRY [LARGE SCALE ANALYSIS]</scope>
    <source>
        <tissue>Erythroleukemia</tissue>
    </source>
</reference>
<reference key="13">
    <citation type="journal article" date="2017" name="EMBO Mol. Med.">
        <title>MSTO1 is a cytoplasmic pro-mitochondrial fusion protein, whose mutation induces myopathy and ataxia in humans.</title>
        <authorList>
            <person name="Gal A."/>
            <person name="Balicza P."/>
            <person name="Weaver D."/>
            <person name="Naghdi S."/>
            <person name="Joseph S.K."/>
            <person name="Varnai P."/>
            <person name="Gyuris T."/>
            <person name="Horvath A."/>
            <person name="Nagy L."/>
            <person name="Seifert E.L."/>
            <person name="Molnar M.J."/>
            <person name="Hajnoczky G."/>
        </authorList>
    </citation>
    <scope>FUNCTION</scope>
    <scope>SUBCELLULAR LOCATION</scope>
    <scope>INVOLVEMENT IN MMYAT</scope>
    <scope>VARIANT MMYAT MET-8</scope>
    <scope>CHARACTERIZATION OF VARIANT MMYAT MET-8</scope>
</reference>
<reference key="14">
    <citation type="journal article" date="2017" name="Hum. Mutat.">
        <title>Recessive mutations in MSTO1 cause mitochondrial dynamics impairment, leading to myopathy and ataxia.</title>
        <authorList>
            <person name="Nasca A."/>
            <person name="Scotton C."/>
            <person name="Zaharieva I."/>
            <person name="Neri M."/>
            <person name="Selvatici R."/>
            <person name="Magnusson O.T."/>
            <person name="Gal A."/>
            <person name="Weaver D."/>
            <person name="Rossi R."/>
            <person name="Armaroli A."/>
            <person name="Pane M."/>
            <person name="Phadke R."/>
            <person name="Sarkozy A."/>
            <person name="Muntoni F."/>
            <person name="Hughes I."/>
            <person name="Cecconi A."/>
            <person name="Hajnoczky G."/>
            <person name="Donati A."/>
            <person name="Mercuri E."/>
            <person name="Zeviani M."/>
            <person name="Ferlini A."/>
            <person name="Ghezzi D."/>
        </authorList>
    </citation>
    <scope>FUNCTION</scope>
    <scope>SUBCELLULAR LOCATION</scope>
    <scope>VARIANTS MMYAT ILE-324; CYS-345 AND LEU-376</scope>
</reference>
<comment type="function">
    <text evidence="1 2 3">Involved in the regulation of mitochondrial distribution and morphology (PubMed:17349998, PubMed:28544275, PubMed:28554942). Required for mitochondrial fusion and mitochondrial network formation (PubMed:28544275, PubMed:28554942).</text>
</comment>
<comment type="interaction">
    <interactant intactId="EBI-2340176">
        <id>Q9BUK6</id>
    </interactant>
    <interactant intactId="EBI-12037393">
        <id>Q8N4P3-2</id>
        <label>HDDC3</label>
    </interactant>
    <organismsDiffer>false</organismsDiffer>
    <experiments>3</experiments>
</comment>
<comment type="subcellular location">
    <subcellularLocation>
        <location evidence="1 3">Mitochondrion outer membrane</location>
    </subcellularLocation>
    <subcellularLocation>
        <location evidence="2 3">Cytoplasm</location>
    </subcellularLocation>
</comment>
<comment type="alternative products">
    <event type="alternative splicing"/>
    <isoform>
        <id>Q9BUK6-1</id>
        <name>1</name>
        <sequence type="displayed"/>
    </isoform>
    <isoform>
        <id>Q9BUK6-2</id>
        <name>2</name>
        <sequence type="described" ref="VSP_028056"/>
    </isoform>
    <isoform>
        <id>Q9BUK6-3</id>
        <name>3</name>
        <sequence type="described" ref="VSP_028054"/>
    </isoform>
    <isoform>
        <id>Q9BUK6-4</id>
        <name>4</name>
        <sequence type="described" ref="VSP_028051 VSP_028052"/>
    </isoform>
    <isoform>
        <id>Q9BUK6-5</id>
        <name>5</name>
        <sequence type="described" ref="VSP_028050 VSP_028056"/>
    </isoform>
    <isoform>
        <id>Q9BUK6-6</id>
        <name>6</name>
        <sequence type="described" ref="VSP_028049"/>
    </isoform>
    <isoform>
        <id>Q9BUK6-7</id>
        <name>7</name>
        <sequence type="described" ref="VSP_028053 VSP_028055"/>
    </isoform>
</comment>
<comment type="tissue specificity">
    <text evidence="1">Present in all cell lines tested (at protein level). Widely expressed.</text>
</comment>
<comment type="disease" evidence="2 3">
    <disease id="DI-05086">
        <name>Myopathy, mitochondrial, and ataxia</name>
        <acronym>MMYAT</acronym>
        <description>A neuromuscular disorder characterized by muscle weakness and atrophy, ataxia, poor growth, delayed motor development, dysdiadochokinesia, dysmetria and additional neurologic features. Some patients show skeletal and endocrine anomalies, as well as behavioral psychiatric manifestations. MMYAT transmission pattern is consistent with autosomal dominant inheritance in some families, and autosomal recessive inheritance in others.</description>
        <dbReference type="MIM" id="617675"/>
    </disease>
    <text>The disease is caused by variants affecting the gene represented in this entry.</text>
</comment>
<comment type="similarity">
    <text evidence="9">Belongs to the misato family.</text>
</comment>
<comment type="sequence caution" evidence="9">
    <conflict type="frameshift">
        <sequence resource="EMBL-CDS" id="AAM12424"/>
    </conflict>
</comment>